<protein>
    <recommendedName>
        <fullName>5'-3' exoribonuclease 2 homolog</fullName>
        <ecNumber evidence="3 6 7">3.1.13.-</ecNumber>
    </recommendedName>
</protein>
<sequence length="975" mass="110128">MGVPAFFRWLTKKYPATVVNANEDRQRDQDGNRVPVDCTQPNPNFQEFDNLYLDMNGIIHPCTHPEDRPAPKNEDEMFALIFEYIDRIYSIVRPRRLLYMAIDGVAPRAKMNQQRSRRFRASKEMAEKEASIEEQRNRLMAEGIAVPPKKKEEAHFDSNCITPGTPFMARLADALRYYIHDRVTNDASWANIEIILSDANVPGEGEHKIMDYVRKQRGNPAHDPNTVHCLCGADADLIMLGIATHEANFNIIREEFVPNQPRACDLCGQYGHELKECRGAENETDLGDDYCKPEQREKNFIFLRIPVLREYLEKELSMPNLPFKFDVERALDDWVFLCFFVGNDFLPHLPSLEIREGAIDRLIKLYKEMVYQMKGYLTKDGIPELDRVEMIMKGLGRVEDEIFKRRQQDEERFQENQRNKKARMQMYGGGGRGGRGRGRGRGQQPAFVPTHGILAPMAAPMHHSGESTRQMASEARQTAMKFTNDANETAAANLKALLNVKGEESPADIASRKRKAEQPLIKPEEEEDEGPKDDIRLYESGWKDRYYRAKFDVGSDDIEFRHRVAWAYVEGLCWVLRYYYQGCASWDWYFPYHYAPFASDFETVGEFQPDFTRPTKPFNPLEQLMSVFPAASKQHLPVEWQKLMIQDDSPIIDLYPADFRIDLNGKKYAWQGVALLPFVDETRLLATLQSVYPTLTAEEKQRNTRGPNRIFIGRNHKSFEFFQQVAESKSDDLVPLDPTLLNGVSGKIAYDSTATAPGLPFVSPVNHDECQDLPTNCGICVLYEDPEYPQDYIFPALRLDGAKEPEKTLKPDDWNDRRDGRYQPQVGFNRNAPRGSLDQSGHRQVHHYVRGGGGGGGGYRGNSYDDRRGGGGGGGGYNDRQDFGRNYGGRDGGGPQRYHDQQQQRQGGYQGGGYGGGYGGGGGGGGGGGGGSYHQPYNQDQRRGGRGGGGGPPGYQRPPYRGGGGGGYHGNSSWR</sequence>
<organism>
    <name type="scientific">Caenorhabditis elegans</name>
    <dbReference type="NCBI Taxonomy" id="6239"/>
    <lineage>
        <taxon>Eukaryota</taxon>
        <taxon>Metazoa</taxon>
        <taxon>Ecdysozoa</taxon>
        <taxon>Nematoda</taxon>
        <taxon>Chromadorea</taxon>
        <taxon>Rhabditida</taxon>
        <taxon>Rhabditina</taxon>
        <taxon>Rhabditomorpha</taxon>
        <taxon>Rhabditoidea</taxon>
        <taxon>Rhabditidae</taxon>
        <taxon>Peloderinae</taxon>
        <taxon>Caenorhabditis</taxon>
    </lineage>
</organism>
<reference key="1">
    <citation type="journal article" date="1998" name="Science">
        <title>Genome sequence of the nematode C. elegans: a platform for investigating biology.</title>
        <authorList>
            <consortium name="The C. elegans sequencing consortium"/>
        </authorList>
    </citation>
    <scope>NUCLEOTIDE SEQUENCE [LARGE SCALE GENOMIC DNA]</scope>
    <source>
        <strain>Bristol N2</strain>
    </source>
</reference>
<reference key="2">
    <citation type="journal article" date="2005" name="PLoS Biol.">
        <title>Functional genomic analysis of C. elegans molting.</title>
        <authorList>
            <person name="Frand A.R."/>
            <person name="Russel S."/>
            <person name="Ruvkun G."/>
        </authorList>
    </citation>
    <scope>FUNCTION</scope>
    <scope>TISSUE SPECIFICITY</scope>
    <scope>DEVELOPMENTAL STAGE</scope>
    <scope>INDUCTION</scope>
    <scope>DISRUPTION PHENOTYPE</scope>
</reference>
<reference key="3">
    <citation type="journal article" date="2009" name="Nature">
        <title>Active turnover modulates mature microRNA activity in Caenorhabditis elegans.</title>
        <authorList>
            <person name="Chatterjee S."/>
            <person name="Grosshans H."/>
        </authorList>
    </citation>
    <scope>FUNCTION</scope>
    <scope>CATALYTIC ACTIVITY</scope>
    <scope>DISRUPTION PHENOTYPE</scope>
</reference>
<reference key="4">
    <citation type="journal article" date="2011" name="Dev. Cell">
        <title>Target-mediated protection of endogenous microRNAs in C. elegans.</title>
        <authorList>
            <person name="Chatterjee S."/>
            <person name="Fasler M."/>
            <person name="Bussing I."/>
            <person name="Grosshans H."/>
        </authorList>
    </citation>
    <scope>FUNCTION</scope>
    <scope>DISRUPTION PHENOTYPE</scope>
</reference>
<reference key="5">
    <citation type="journal article" date="2013" name="Mol. Cell">
        <title>The decapping scavenger enzyme DCS-1 controls microRNA levels in Caenorhabditis elegans.</title>
        <authorList>
            <person name="Bosse G.D."/>
            <person name="Ruegger S."/>
            <person name="Ow M.C."/>
            <person name="Vasquez-Rifo A."/>
            <person name="Rondeau E.L."/>
            <person name="Ambros V.R."/>
            <person name="Grosshans H."/>
            <person name="Simard M.J."/>
        </authorList>
    </citation>
    <scope>SUBCELLULAR LOCATION</scope>
</reference>
<reference key="6">
    <citation type="journal article" date="2014" name="Mol. Cell">
        <title>PAXT-1 promotes XRN2 activity by stabilizing it through a conserved domain.</title>
        <authorList>
            <person name="Miki T.S."/>
            <person name="Richter H."/>
            <person name="Rueegger S."/>
            <person name="Grosshans H."/>
        </authorList>
    </citation>
    <scope>FUNCTION</scope>
    <scope>CATALYTIC ACTIVITY</scope>
    <scope>INTERACTION WITH PAXT-1</scope>
    <scope>DEVELOPMENTAL STAGE</scope>
    <scope>DISRUPTION PHENOTYPE</scope>
    <scope>MUTAGENESIS OF 234-ASP--ASP-236</scope>
</reference>
<reference key="7">
    <citation type="journal article" date="2016" name="Nat. Struct. Mol. Biol.">
        <title>Structural basis and function of XRN2 binding by XTB domains.</title>
        <authorList>
            <person name="Richter H."/>
            <person name="Katic I."/>
            <person name="Gut H."/>
            <person name="Grosshans H."/>
        </authorList>
    </citation>
    <scope>X-RAY CRYSTALLOGRAPHY (2.84 ANGSTROMS) OF 1-787 IN COMPLEX WITH PAXT-1</scope>
    <scope>FUNCTION</scope>
    <scope>CATALYTIC ACTIVITY</scope>
    <scope>BIOPHYSICOCHEMICAL PROPERTIES</scope>
</reference>
<accession>Q9U299</accession>
<keyword id="KW-0002">3D-structure</keyword>
<keyword id="KW-0217">Developmental protein</keyword>
<keyword id="KW-0269">Exonuclease</keyword>
<keyword id="KW-0378">Hydrolase</keyword>
<keyword id="KW-0479">Metal-binding</keyword>
<keyword id="KW-0507">mRNA processing</keyword>
<keyword id="KW-0540">Nuclease</keyword>
<keyword id="KW-0539">Nucleus</keyword>
<keyword id="KW-1185">Reference proteome</keyword>
<keyword id="KW-0804">Transcription</keyword>
<keyword id="KW-0805">Transcription regulation</keyword>
<keyword id="KW-0806">Transcription termination</keyword>
<keyword id="KW-0862">Zinc</keyword>
<keyword id="KW-0863">Zinc-finger</keyword>
<comment type="function">
    <text evidence="2 3 4 6 7">Possesses 5'-&gt;3' exoribonuclease activity (PubMed:19734881, PubMed:21397849). Plays a role in maintenance of steady-state concentration and turnover of microRNAs (miRNA) by degradation of mature miRNA (PubMed:19734881, PubMed:21397849, PubMed:26779609). Degradation role is enhanced when in complex with paxt-1 (PubMed:24462208, PubMed:26779609). Partially redundant to xrn-1 in miRNA guide strand degradation (PubMed:19734881, PubMed:21397849). Implicated in differential regulation of mRNAs such as let-7 by controlling the accumulation of mature miRNA (PubMed:19734881, PubMed:21397849). Positively regulates molting of the pharyngeal cuticle (PubMed:16122351, PubMed:19734881).</text>
</comment>
<comment type="biophysicochemical properties">
    <kinetics>
        <KM evidence="7">0.3913 uM for FAM fluorophore-coupled RNA substrate and a quencher-coupled DNA primer</KM>
        <Vmax evidence="7">1.97E-4 umol/sec/ug enzyme</Vmax>
    </kinetics>
</comment>
<comment type="subunit">
    <text evidence="6 7">Interacts with paxt-1 (via N-terminus); the interaction is direct and results in stabilization of xrn-2 in the complex.</text>
</comment>
<comment type="interaction">
    <interactant intactId="EBI-320499">
        <id>Q9U299</id>
    </interactant>
    <interactant intactId="EBI-11705385">
        <id>Q21738</id>
        <label>paxt-1</label>
    </interactant>
    <organismsDiffer>false</organismsDiffer>
    <experiments>5</experiments>
</comment>
<comment type="subcellular location">
    <subcellularLocation>
        <location evidence="5">Nucleus</location>
    </subcellularLocation>
</comment>
<comment type="tissue specificity">
    <text evidence="2">Expressed in the pharyngeal myoepithelium and intestine. Also expressed in several anterior neurons including the sensory neurons, as well as the interneuron PVT and the pharyngeal motorneuron M5.</text>
</comment>
<comment type="developmental stage">
    <text evidence="2 6">Expressed throughout all developmental stages. Detected in the M5 pharyngeal neuron only in larvae. Also persistently expressed in the intestine of adults past the molting stage.</text>
</comment>
<comment type="induction">
    <text evidence="2">Up-regulated prior to molting.</text>
</comment>
<comment type="disruption phenotype">
    <text evidence="2 3 4 6">RNAi-mediated knockdown results in impaired miRNA degradation leading to accumulation of mature miRNA passenger (miR*) strands (PubMed:19734881, PubMed:21397849). Defective molting owing to failure to shed cuticle from the pharynx in the late L4-stage larvae (PubMed:16122351). Suppresses the vulval bursting phenotype of let-7 mutant (PubMed:19734881). Reduced paxt-1 expression (PubMed:24462208).</text>
</comment>
<comment type="similarity">
    <text evidence="8">Belongs to the 5'-3' exonuclease family. XRN2/RAT1 subfamily.</text>
</comment>
<gene>
    <name evidence="9" type="primary">xrn-2</name>
    <name evidence="9" type="ORF">Y48B6A.3</name>
</gene>
<proteinExistence type="evidence at protein level"/>
<dbReference type="EC" id="3.1.13.-" evidence="3 6 7"/>
<dbReference type="EMBL" id="AL110490">
    <property type="protein sequence ID" value="CAB54449.2"/>
    <property type="molecule type" value="Genomic_DNA"/>
</dbReference>
<dbReference type="PIR" id="T27005">
    <property type="entry name" value="T27005"/>
</dbReference>
<dbReference type="RefSeq" id="NP_496958.2">
    <property type="nucleotide sequence ID" value="NM_064557.7"/>
</dbReference>
<dbReference type="PDB" id="5FIR">
    <property type="method" value="X-ray"/>
    <property type="resolution" value="2.84 A"/>
    <property type="chains" value="A/C/E/G/I/K=1-787"/>
</dbReference>
<dbReference type="PDBsum" id="5FIR"/>
<dbReference type="SMR" id="Q9U299"/>
<dbReference type="BioGRID" id="40353">
    <property type="interactions" value="14"/>
</dbReference>
<dbReference type="ComplexPortal" id="CPX-420">
    <property type="entry name" value="xtbd-paxt-1 complex"/>
</dbReference>
<dbReference type="DIP" id="DIP-24636N"/>
<dbReference type="FunCoup" id="Q9U299">
    <property type="interactions" value="3342"/>
</dbReference>
<dbReference type="IntAct" id="Q9U299">
    <property type="interactions" value="3"/>
</dbReference>
<dbReference type="STRING" id="6239.Y48B6A.3.1"/>
<dbReference type="PaxDb" id="6239-Y48B6A.3"/>
<dbReference type="PeptideAtlas" id="Q9U299"/>
<dbReference type="EnsemblMetazoa" id="Y48B6A.3.1">
    <property type="protein sequence ID" value="Y48B6A.3.1"/>
    <property type="gene ID" value="WBGene00006964"/>
</dbReference>
<dbReference type="GeneID" id="175071"/>
<dbReference type="KEGG" id="cel:CELE_Y48B6A.3"/>
<dbReference type="UCSC" id="Y48B6A.3">
    <property type="organism name" value="c. elegans"/>
</dbReference>
<dbReference type="AGR" id="WB:WBGene00006964"/>
<dbReference type="CTD" id="175071"/>
<dbReference type="WormBase" id="Y48B6A.3">
    <property type="protein sequence ID" value="CE42702"/>
    <property type="gene ID" value="WBGene00006964"/>
    <property type="gene designation" value="xrn-2"/>
</dbReference>
<dbReference type="eggNOG" id="KOG2044">
    <property type="taxonomic scope" value="Eukaryota"/>
</dbReference>
<dbReference type="GeneTree" id="ENSGT00670000098098"/>
<dbReference type="HOGENOM" id="CLU_006038_1_2_1"/>
<dbReference type="InParanoid" id="Q9U299"/>
<dbReference type="OMA" id="ITHDMVV"/>
<dbReference type="OrthoDB" id="372487at2759"/>
<dbReference type="PhylomeDB" id="Q9U299"/>
<dbReference type="SABIO-RK" id="Q9U299"/>
<dbReference type="PRO" id="PR:Q9U299"/>
<dbReference type="Proteomes" id="UP000001940">
    <property type="component" value="Chromosome II"/>
</dbReference>
<dbReference type="Bgee" id="WBGene00006964">
    <property type="expression patterns" value="Expressed in embryo and 4 other cell types or tissues"/>
</dbReference>
<dbReference type="GO" id="GO:0005730">
    <property type="term" value="C:nucleolus"/>
    <property type="evidence" value="ECO:0000250"/>
    <property type="project" value="UniProtKB"/>
</dbReference>
<dbReference type="GO" id="GO:0005634">
    <property type="term" value="C:nucleus"/>
    <property type="evidence" value="ECO:0000314"/>
    <property type="project" value="WormBase"/>
</dbReference>
<dbReference type="GO" id="GO:0008409">
    <property type="term" value="F:5'-3' exonuclease activity"/>
    <property type="evidence" value="ECO:0000250"/>
    <property type="project" value="UniProtKB"/>
</dbReference>
<dbReference type="GO" id="GO:0004534">
    <property type="term" value="F:5'-3' RNA exonuclease activity"/>
    <property type="evidence" value="ECO:0000314"/>
    <property type="project" value="WormBase"/>
</dbReference>
<dbReference type="GO" id="GO:0003723">
    <property type="term" value="F:RNA binding"/>
    <property type="evidence" value="ECO:0000318"/>
    <property type="project" value="GO_Central"/>
</dbReference>
<dbReference type="GO" id="GO:0008270">
    <property type="term" value="F:zinc ion binding"/>
    <property type="evidence" value="ECO:0007669"/>
    <property type="project" value="UniProtKB-KW"/>
</dbReference>
<dbReference type="GO" id="GO:0010587">
    <property type="term" value="P:miRNA catabolic process"/>
    <property type="evidence" value="ECO:0000314"/>
    <property type="project" value="WormBase"/>
</dbReference>
<dbReference type="GO" id="GO:0006397">
    <property type="term" value="P:mRNA processing"/>
    <property type="evidence" value="ECO:0007669"/>
    <property type="project" value="UniProtKB-KW"/>
</dbReference>
<dbReference type="GO" id="GO:0060965">
    <property type="term" value="P:negative regulation of miRNA-mediated gene silencing"/>
    <property type="evidence" value="ECO:0000269"/>
    <property type="project" value="ComplexPortal"/>
</dbReference>
<dbReference type="GO" id="GO:0000956">
    <property type="term" value="P:nuclear-transcribed mRNA catabolic process"/>
    <property type="evidence" value="ECO:0000318"/>
    <property type="project" value="GO_Central"/>
</dbReference>
<dbReference type="GO" id="GO:0040034">
    <property type="term" value="P:regulation of development, heterochronic"/>
    <property type="evidence" value="ECO:0000316"/>
    <property type="project" value="WormBase"/>
</dbReference>
<dbReference type="GO" id="GO:0040028">
    <property type="term" value="P:regulation of vulval development"/>
    <property type="evidence" value="ECO:0000316"/>
    <property type="project" value="WormBase"/>
</dbReference>
<dbReference type="GO" id="GO:0006369">
    <property type="term" value="P:termination of RNA polymerase II transcription"/>
    <property type="evidence" value="ECO:0000250"/>
    <property type="project" value="UniProtKB"/>
</dbReference>
<dbReference type="CDD" id="cd18673">
    <property type="entry name" value="PIN_XRN1-2-like"/>
    <property type="match status" value="1"/>
</dbReference>
<dbReference type="FunFam" id="1.25.40.1050:FF:000002">
    <property type="entry name" value="5'-3' exoribonuclease"/>
    <property type="match status" value="1"/>
</dbReference>
<dbReference type="FunFam" id="3.40.50.12390:FF:000001">
    <property type="entry name" value="5'-3' exoribonuclease"/>
    <property type="match status" value="1"/>
</dbReference>
<dbReference type="FunFam" id="3.40.50.12390:FF:000003">
    <property type="entry name" value="5'-3' exoribonuclease"/>
    <property type="match status" value="1"/>
</dbReference>
<dbReference type="Gene3D" id="1.25.40.1050">
    <property type="match status" value="1"/>
</dbReference>
<dbReference type="Gene3D" id="3.40.50.12390">
    <property type="match status" value="2"/>
</dbReference>
<dbReference type="InterPro" id="IPR027073">
    <property type="entry name" value="5_3_exoribonuclease"/>
</dbReference>
<dbReference type="InterPro" id="IPR041412">
    <property type="entry name" value="Xrn1_helical"/>
</dbReference>
<dbReference type="InterPro" id="IPR004859">
    <property type="entry name" value="Xrn1_N"/>
</dbReference>
<dbReference type="InterPro" id="IPR017151">
    <property type="entry name" value="Xrn2/3/4"/>
</dbReference>
<dbReference type="PANTHER" id="PTHR12341:SF41">
    <property type="entry name" value="5'-3' EXORIBONUCLEASE 2"/>
    <property type="match status" value="1"/>
</dbReference>
<dbReference type="PANTHER" id="PTHR12341">
    <property type="entry name" value="5'-&gt;3' EXORIBONUCLEASE"/>
    <property type="match status" value="1"/>
</dbReference>
<dbReference type="Pfam" id="PF17846">
    <property type="entry name" value="XRN_M"/>
    <property type="match status" value="2"/>
</dbReference>
<dbReference type="Pfam" id="PF03159">
    <property type="entry name" value="XRN_N"/>
    <property type="match status" value="1"/>
</dbReference>
<dbReference type="PIRSF" id="PIRSF037239">
    <property type="entry name" value="Exonuclease_Xrn2"/>
    <property type="match status" value="1"/>
</dbReference>
<name>XRN2_CAEEL</name>
<feature type="chain" id="PRO_0000249916" description="5'-3' exoribonuclease 2 homolog">
    <location>
        <begin position="1"/>
        <end position="975"/>
    </location>
</feature>
<feature type="zinc finger region" description="CCHC-type">
    <location>
        <begin position="262"/>
        <end position="279"/>
    </location>
</feature>
<feature type="region of interest" description="Disordered" evidence="1">
    <location>
        <begin position="424"/>
        <end position="443"/>
    </location>
</feature>
<feature type="region of interest" description="Disordered" evidence="1">
    <location>
        <begin position="505"/>
        <end position="532"/>
    </location>
</feature>
<feature type="region of interest" description="Interaction with paxt-1" evidence="6 7">
    <location>
        <begin position="534"/>
        <end position="787"/>
    </location>
</feature>
<feature type="region of interest" description="Disordered" evidence="1">
    <location>
        <begin position="804"/>
        <end position="975"/>
    </location>
</feature>
<feature type="compositionally biased region" description="Basic and acidic residues" evidence="1">
    <location>
        <begin position="804"/>
        <end position="821"/>
    </location>
</feature>
<feature type="compositionally biased region" description="Gly residues" evidence="1">
    <location>
        <begin position="850"/>
        <end position="860"/>
    </location>
</feature>
<feature type="compositionally biased region" description="Gly residues" evidence="1">
    <location>
        <begin position="886"/>
        <end position="895"/>
    </location>
</feature>
<feature type="compositionally biased region" description="Gly residues" evidence="1">
    <location>
        <begin position="908"/>
        <end position="932"/>
    </location>
</feature>
<feature type="mutagenesis site" description="Abolishes catalytic activity." evidence="6">
    <original>DAD</original>
    <variation>AAA</variation>
    <location>
        <begin position="234"/>
        <end position="236"/>
    </location>
</feature>
<feature type="helix" evidence="10">
    <location>
        <begin position="5"/>
        <end position="13"/>
    </location>
</feature>
<feature type="helix" evidence="10">
    <location>
        <begin position="15"/>
        <end position="17"/>
    </location>
</feature>
<feature type="strand" evidence="10">
    <location>
        <begin position="18"/>
        <end position="20"/>
    </location>
</feature>
<feature type="strand" evidence="10">
    <location>
        <begin position="43"/>
        <end position="46"/>
    </location>
</feature>
<feature type="strand" evidence="10">
    <location>
        <begin position="48"/>
        <end position="54"/>
    </location>
</feature>
<feature type="helix" evidence="10">
    <location>
        <begin position="56"/>
        <end position="63"/>
    </location>
</feature>
<feature type="strand" evidence="10">
    <location>
        <begin position="66"/>
        <end position="68"/>
    </location>
</feature>
<feature type="helix" evidence="10">
    <location>
        <begin position="74"/>
        <end position="92"/>
    </location>
</feature>
<feature type="strand" evidence="10">
    <location>
        <begin position="94"/>
        <end position="101"/>
    </location>
</feature>
<feature type="helix" evidence="10">
    <location>
        <begin position="108"/>
        <end position="142"/>
    </location>
</feature>
<feature type="helix" evidence="10">
    <location>
        <begin position="158"/>
        <end position="160"/>
    </location>
</feature>
<feature type="helix" evidence="10">
    <location>
        <begin position="166"/>
        <end position="185"/>
    </location>
</feature>
<feature type="helix" evidence="10">
    <location>
        <begin position="187"/>
        <end position="191"/>
    </location>
</feature>
<feature type="strand" evidence="10">
    <location>
        <begin position="193"/>
        <end position="197"/>
    </location>
</feature>
<feature type="helix" evidence="10">
    <location>
        <begin position="205"/>
        <end position="217"/>
    </location>
</feature>
<feature type="strand" evidence="10">
    <location>
        <begin position="227"/>
        <end position="231"/>
    </location>
</feature>
<feature type="helix" evidence="10">
    <location>
        <begin position="236"/>
        <end position="243"/>
    </location>
</feature>
<feature type="strand" evidence="10">
    <location>
        <begin position="247"/>
        <end position="254"/>
    </location>
</feature>
<feature type="strand" evidence="10">
    <location>
        <begin position="300"/>
        <end position="304"/>
    </location>
</feature>
<feature type="helix" evidence="10">
    <location>
        <begin position="305"/>
        <end position="315"/>
    </location>
</feature>
<feature type="helix" evidence="10">
    <location>
        <begin position="327"/>
        <end position="341"/>
    </location>
</feature>
<feature type="helix" evidence="10">
    <location>
        <begin position="354"/>
        <end position="356"/>
    </location>
</feature>
<feature type="helix" evidence="10">
    <location>
        <begin position="358"/>
        <end position="373"/>
    </location>
</feature>
<feature type="strand" evidence="10">
    <location>
        <begin position="377"/>
        <end position="379"/>
    </location>
</feature>
<feature type="helix" evidence="10">
    <location>
        <begin position="385"/>
        <end position="397"/>
    </location>
</feature>
<feature type="helix" evidence="10">
    <location>
        <begin position="399"/>
        <end position="407"/>
    </location>
</feature>
<feature type="strand" evidence="10">
    <location>
        <begin position="537"/>
        <end position="539"/>
    </location>
</feature>
<feature type="helix" evidence="10">
    <location>
        <begin position="542"/>
        <end position="551"/>
    </location>
</feature>
<feature type="helix" evidence="10">
    <location>
        <begin position="558"/>
        <end position="581"/>
    </location>
</feature>
<feature type="helix" evidence="10">
    <location>
        <begin position="598"/>
        <end position="601"/>
    </location>
</feature>
<feature type="helix" evidence="10">
    <location>
        <begin position="604"/>
        <end position="606"/>
    </location>
</feature>
<feature type="helix" evidence="10">
    <location>
        <begin position="620"/>
        <end position="627"/>
    </location>
</feature>
<feature type="helix" evidence="10">
    <location>
        <begin position="630"/>
        <end position="635"/>
    </location>
</feature>
<feature type="helix" evidence="10">
    <location>
        <begin position="638"/>
        <end position="645"/>
    </location>
</feature>
<feature type="helix" evidence="10">
    <location>
        <begin position="652"/>
        <end position="654"/>
    </location>
</feature>
<feature type="helix" evidence="10">
    <location>
        <begin position="669"/>
        <end position="671"/>
    </location>
</feature>
<feature type="strand" evidence="10">
    <location>
        <begin position="672"/>
        <end position="674"/>
    </location>
</feature>
<feature type="helix" evidence="10">
    <location>
        <begin position="681"/>
        <end position="688"/>
    </location>
</feature>
<feature type="helix" evidence="10">
    <location>
        <begin position="689"/>
        <end position="694"/>
    </location>
</feature>
<feature type="helix" evidence="10">
    <location>
        <begin position="697"/>
        <end position="702"/>
    </location>
</feature>
<feature type="strand" evidence="10">
    <location>
        <begin position="708"/>
        <end position="713"/>
    </location>
</feature>
<feature type="helix" evidence="10">
    <location>
        <begin position="719"/>
        <end position="728"/>
    </location>
</feature>
<feature type="helix" evidence="10">
    <location>
        <begin position="738"/>
        <end position="741"/>
    </location>
</feature>
<feature type="strand" evidence="10">
    <location>
        <begin position="747"/>
        <end position="749"/>
    </location>
</feature>
<feature type="strand" evidence="10">
    <location>
        <begin position="773"/>
        <end position="775"/>
    </location>
</feature>
<feature type="strand" evidence="10">
    <location>
        <begin position="778"/>
        <end position="784"/>
    </location>
</feature>
<evidence type="ECO:0000256" key="1">
    <source>
        <dbReference type="SAM" id="MobiDB-lite"/>
    </source>
</evidence>
<evidence type="ECO:0000269" key="2">
    <source>
    </source>
</evidence>
<evidence type="ECO:0000269" key="3">
    <source>
    </source>
</evidence>
<evidence type="ECO:0000269" key="4">
    <source>
    </source>
</evidence>
<evidence type="ECO:0000269" key="5">
    <source>
    </source>
</evidence>
<evidence type="ECO:0000269" key="6">
    <source>
    </source>
</evidence>
<evidence type="ECO:0000269" key="7">
    <source>
    </source>
</evidence>
<evidence type="ECO:0000305" key="8"/>
<evidence type="ECO:0000312" key="9">
    <source>
        <dbReference type="WormBase" id="Y48B6A.3"/>
    </source>
</evidence>
<evidence type="ECO:0007829" key="10">
    <source>
        <dbReference type="PDB" id="5FIR"/>
    </source>
</evidence>